<feature type="chain" id="PRO_0000117775" description="NADH-ubiquinone oxidoreductase chain 3">
    <location>
        <begin position="1"/>
        <end position="116"/>
    </location>
</feature>
<feature type="transmembrane region" description="Helical" evidence="2">
    <location>
        <begin position="3"/>
        <end position="23"/>
    </location>
</feature>
<feature type="transmembrane region" description="Helical" evidence="2">
    <location>
        <begin position="56"/>
        <end position="76"/>
    </location>
</feature>
<feature type="transmembrane region" description="Helical" evidence="2">
    <location>
        <begin position="87"/>
        <end position="107"/>
    </location>
</feature>
<organism>
    <name type="scientific">Oncorhynchus gorbuscha</name>
    <name type="common">Pink salmon</name>
    <name type="synonym">Salmo gorbuscha</name>
    <dbReference type="NCBI Taxonomy" id="8017"/>
    <lineage>
        <taxon>Eukaryota</taxon>
        <taxon>Metazoa</taxon>
        <taxon>Chordata</taxon>
        <taxon>Craniata</taxon>
        <taxon>Vertebrata</taxon>
        <taxon>Euteleostomi</taxon>
        <taxon>Actinopterygii</taxon>
        <taxon>Neopterygii</taxon>
        <taxon>Teleostei</taxon>
        <taxon>Protacanthopterygii</taxon>
        <taxon>Salmoniformes</taxon>
        <taxon>Salmonidae</taxon>
        <taxon>Salmoninae</taxon>
        <taxon>Oncorhynchus</taxon>
    </lineage>
</organism>
<gene>
    <name type="primary">MT-ND3</name>
    <name type="synonym">MTND3</name>
    <name type="synonym">NADH3</name>
    <name type="synonym">ND3</name>
</gene>
<evidence type="ECO:0000250" key="1"/>
<evidence type="ECO:0000255" key="2"/>
<evidence type="ECO:0000305" key="3"/>
<comment type="function">
    <text evidence="1">Core subunit of the mitochondrial membrane respiratory chain NADH dehydrogenase (Complex I) that is believed to belong to the minimal assembly required for catalysis. Complex I functions in the transfer of electrons from NADH to the respiratory chain. The immediate electron acceptor for the enzyme is believed to be ubiquinone (By similarity).</text>
</comment>
<comment type="catalytic activity">
    <reaction>
        <text>a ubiquinone + NADH + 5 H(+)(in) = a ubiquinol + NAD(+) + 4 H(+)(out)</text>
        <dbReference type="Rhea" id="RHEA:29091"/>
        <dbReference type="Rhea" id="RHEA-COMP:9565"/>
        <dbReference type="Rhea" id="RHEA-COMP:9566"/>
        <dbReference type="ChEBI" id="CHEBI:15378"/>
        <dbReference type="ChEBI" id="CHEBI:16389"/>
        <dbReference type="ChEBI" id="CHEBI:17976"/>
        <dbReference type="ChEBI" id="CHEBI:57540"/>
        <dbReference type="ChEBI" id="CHEBI:57945"/>
        <dbReference type="EC" id="7.1.1.2"/>
    </reaction>
</comment>
<comment type="subcellular location">
    <subcellularLocation>
        <location evidence="1">Mitochondrion membrane</location>
        <topology evidence="1">Multi-pass membrane protein</topology>
    </subcellularLocation>
</comment>
<comment type="similarity">
    <text evidence="3">Belongs to the complex I subunit 3 family.</text>
</comment>
<accession>P20686</accession>
<proteinExistence type="inferred from homology"/>
<dbReference type="EC" id="7.1.1.2"/>
<dbReference type="PIR" id="F30396">
    <property type="entry name" value="F30396"/>
</dbReference>
<dbReference type="RefSeq" id="YP_001974508.1">
    <property type="nucleotide sequence ID" value="NC_010959.1"/>
</dbReference>
<dbReference type="SMR" id="P20686"/>
<dbReference type="GeneID" id="6383208"/>
<dbReference type="KEGG" id="ogo:6383208"/>
<dbReference type="CTD" id="4537"/>
<dbReference type="OrthoDB" id="62658at7898"/>
<dbReference type="GO" id="GO:0031966">
    <property type="term" value="C:mitochondrial membrane"/>
    <property type="evidence" value="ECO:0007669"/>
    <property type="project" value="UniProtKB-SubCell"/>
</dbReference>
<dbReference type="GO" id="GO:0030964">
    <property type="term" value="C:NADH dehydrogenase complex"/>
    <property type="evidence" value="ECO:0007669"/>
    <property type="project" value="TreeGrafter"/>
</dbReference>
<dbReference type="GO" id="GO:0008137">
    <property type="term" value="F:NADH dehydrogenase (ubiquinone) activity"/>
    <property type="evidence" value="ECO:0007669"/>
    <property type="project" value="UniProtKB-EC"/>
</dbReference>
<dbReference type="FunFam" id="1.20.58.1610:FF:000004">
    <property type="entry name" value="NADH-quinone oxidoreductase subunit A"/>
    <property type="match status" value="1"/>
</dbReference>
<dbReference type="Gene3D" id="1.20.58.1610">
    <property type="entry name" value="NADH:ubiquinone/plastoquinone oxidoreductase, chain 3"/>
    <property type="match status" value="1"/>
</dbReference>
<dbReference type="InterPro" id="IPR000440">
    <property type="entry name" value="NADH_UbQ/plastoQ_OxRdtase_su3"/>
</dbReference>
<dbReference type="InterPro" id="IPR038430">
    <property type="entry name" value="NDAH_ubi_oxred_su3_sf"/>
</dbReference>
<dbReference type="PANTHER" id="PTHR11058">
    <property type="entry name" value="NADH-UBIQUINONE OXIDOREDUCTASE CHAIN 3"/>
    <property type="match status" value="1"/>
</dbReference>
<dbReference type="PANTHER" id="PTHR11058:SF9">
    <property type="entry name" value="NADH-UBIQUINONE OXIDOREDUCTASE CHAIN 3"/>
    <property type="match status" value="1"/>
</dbReference>
<dbReference type="Pfam" id="PF00507">
    <property type="entry name" value="Oxidored_q4"/>
    <property type="match status" value="1"/>
</dbReference>
<sequence length="116" mass="12908">MNLITTIITITITLSAVLATISFWLPQISPDAEKLSPYECGFDPLGSARLPFSLRFFLIAILFLLFDLEIALLLPLPWGDQLNTPTLTLIWSTAVLALLTLGLIYEWTQGGLEWAE</sequence>
<name>NU3M_ONCGO</name>
<geneLocation type="mitochondrion"/>
<reference key="1">
    <citation type="journal article" date="1989" name="J. Mol. Evol.">
        <title>Variation in salmonid mitochondrial DNA: evolutionary constraints and mechanisms of substitution.</title>
        <authorList>
            <person name="Thomas W.K."/>
            <person name="Beckenbach A.T."/>
        </authorList>
    </citation>
    <scope>NUCLEOTIDE SEQUENCE</scope>
</reference>
<protein>
    <recommendedName>
        <fullName>NADH-ubiquinone oxidoreductase chain 3</fullName>
        <ecNumber>7.1.1.2</ecNumber>
    </recommendedName>
    <alternativeName>
        <fullName>NADH dehydrogenase subunit 3</fullName>
    </alternativeName>
</protein>
<keyword id="KW-0249">Electron transport</keyword>
<keyword id="KW-0472">Membrane</keyword>
<keyword id="KW-0496">Mitochondrion</keyword>
<keyword id="KW-0520">NAD</keyword>
<keyword id="KW-0679">Respiratory chain</keyword>
<keyword id="KW-1278">Translocase</keyword>
<keyword id="KW-0812">Transmembrane</keyword>
<keyword id="KW-1133">Transmembrane helix</keyword>
<keyword id="KW-0813">Transport</keyword>
<keyword id="KW-0830">Ubiquinone</keyword>